<accession>Q8R9V6</accession>
<evidence type="ECO:0000255" key="1">
    <source>
        <dbReference type="HAMAP-Rule" id="MF_00019"/>
    </source>
</evidence>
<evidence type="ECO:0000305" key="2"/>
<gene>
    <name evidence="1" type="primary">plsX</name>
    <name type="ordered locus">TTE1476</name>
</gene>
<name>PLSX_CALS4</name>
<protein>
    <recommendedName>
        <fullName evidence="1">Phosphate acyltransferase</fullName>
        <ecNumber evidence="1">2.3.1.274</ecNumber>
    </recommendedName>
    <alternativeName>
        <fullName evidence="1">Acyl-ACP phosphotransacylase</fullName>
    </alternativeName>
    <alternativeName>
        <fullName evidence="1">Acyl-[acyl-carrier-protein]--phosphate acyltransferase</fullName>
    </alternativeName>
    <alternativeName>
        <fullName evidence="1">Phosphate-acyl-ACP acyltransferase</fullName>
    </alternativeName>
</protein>
<keyword id="KW-0963">Cytoplasm</keyword>
<keyword id="KW-0444">Lipid biosynthesis</keyword>
<keyword id="KW-0443">Lipid metabolism</keyword>
<keyword id="KW-0594">Phospholipid biosynthesis</keyword>
<keyword id="KW-1208">Phospholipid metabolism</keyword>
<keyword id="KW-1185">Reference proteome</keyword>
<keyword id="KW-0808">Transferase</keyword>
<comment type="function">
    <text evidence="1">Catalyzes the reversible formation of acyl-phosphate (acyl-PO(4)) from acyl-[acyl-carrier-protein] (acyl-ACP). This enzyme utilizes acyl-ACP as fatty acyl donor, but not acyl-CoA.</text>
</comment>
<comment type="catalytic activity">
    <reaction evidence="1">
        <text>a fatty acyl-[ACP] + phosphate = an acyl phosphate + holo-[ACP]</text>
        <dbReference type="Rhea" id="RHEA:42292"/>
        <dbReference type="Rhea" id="RHEA-COMP:9685"/>
        <dbReference type="Rhea" id="RHEA-COMP:14125"/>
        <dbReference type="ChEBI" id="CHEBI:43474"/>
        <dbReference type="ChEBI" id="CHEBI:59918"/>
        <dbReference type="ChEBI" id="CHEBI:64479"/>
        <dbReference type="ChEBI" id="CHEBI:138651"/>
        <dbReference type="EC" id="2.3.1.274"/>
    </reaction>
</comment>
<comment type="pathway">
    <text evidence="1">Lipid metabolism; phospholipid metabolism.</text>
</comment>
<comment type="subunit">
    <text evidence="1">Homodimer. Probably interacts with PlsY.</text>
</comment>
<comment type="subcellular location">
    <subcellularLocation>
        <location evidence="1">Cytoplasm</location>
    </subcellularLocation>
    <text evidence="1">Associated with the membrane possibly through PlsY.</text>
</comment>
<comment type="similarity">
    <text evidence="1">Belongs to the PlsX family.</text>
</comment>
<comment type="sequence caution" evidence="2">
    <conflict type="erroneous initiation">
        <sequence resource="EMBL-CDS" id="AAM24698"/>
    </conflict>
</comment>
<proteinExistence type="inferred from homology"/>
<feature type="chain" id="PRO_0000189959" description="Phosphate acyltransferase">
    <location>
        <begin position="1"/>
        <end position="332"/>
    </location>
</feature>
<organism>
    <name type="scientific">Caldanaerobacter subterraneus subsp. tengcongensis (strain DSM 15242 / JCM 11007 / NBRC 100824 / MB4)</name>
    <name type="common">Thermoanaerobacter tengcongensis</name>
    <dbReference type="NCBI Taxonomy" id="273068"/>
    <lineage>
        <taxon>Bacteria</taxon>
        <taxon>Bacillati</taxon>
        <taxon>Bacillota</taxon>
        <taxon>Clostridia</taxon>
        <taxon>Thermoanaerobacterales</taxon>
        <taxon>Thermoanaerobacteraceae</taxon>
        <taxon>Caldanaerobacter</taxon>
    </lineage>
</organism>
<dbReference type="EC" id="2.3.1.274" evidence="1"/>
<dbReference type="EMBL" id="AE008691">
    <property type="protein sequence ID" value="AAM24698.1"/>
    <property type="status" value="ALT_INIT"/>
    <property type="molecule type" value="Genomic_DNA"/>
</dbReference>
<dbReference type="RefSeq" id="WP_041587164.1">
    <property type="nucleotide sequence ID" value="NC_003869.1"/>
</dbReference>
<dbReference type="SMR" id="Q8R9V6"/>
<dbReference type="STRING" id="273068.TTE1476"/>
<dbReference type="KEGG" id="tte:TTE1476"/>
<dbReference type="eggNOG" id="COG0416">
    <property type="taxonomic scope" value="Bacteria"/>
</dbReference>
<dbReference type="HOGENOM" id="CLU_039379_1_1_9"/>
<dbReference type="OrthoDB" id="9806408at2"/>
<dbReference type="UniPathway" id="UPA00085"/>
<dbReference type="Proteomes" id="UP000000555">
    <property type="component" value="Chromosome"/>
</dbReference>
<dbReference type="GO" id="GO:0005737">
    <property type="term" value="C:cytoplasm"/>
    <property type="evidence" value="ECO:0007669"/>
    <property type="project" value="UniProtKB-SubCell"/>
</dbReference>
<dbReference type="GO" id="GO:0043811">
    <property type="term" value="F:phosphate:acyl-[acyl carrier protein] acyltransferase activity"/>
    <property type="evidence" value="ECO:0007669"/>
    <property type="project" value="UniProtKB-UniRule"/>
</dbReference>
<dbReference type="GO" id="GO:0006633">
    <property type="term" value="P:fatty acid biosynthetic process"/>
    <property type="evidence" value="ECO:0007669"/>
    <property type="project" value="UniProtKB-UniRule"/>
</dbReference>
<dbReference type="GO" id="GO:0008654">
    <property type="term" value="P:phospholipid biosynthetic process"/>
    <property type="evidence" value="ECO:0007669"/>
    <property type="project" value="UniProtKB-KW"/>
</dbReference>
<dbReference type="Gene3D" id="3.40.718.10">
    <property type="entry name" value="Isopropylmalate Dehydrogenase"/>
    <property type="match status" value="1"/>
</dbReference>
<dbReference type="HAMAP" id="MF_00019">
    <property type="entry name" value="PlsX"/>
    <property type="match status" value="1"/>
</dbReference>
<dbReference type="InterPro" id="IPR003664">
    <property type="entry name" value="FA_synthesis"/>
</dbReference>
<dbReference type="InterPro" id="IPR012281">
    <property type="entry name" value="Phospholipid_synth_PlsX-like"/>
</dbReference>
<dbReference type="NCBIfam" id="TIGR00182">
    <property type="entry name" value="plsX"/>
    <property type="match status" value="1"/>
</dbReference>
<dbReference type="PANTHER" id="PTHR30100">
    <property type="entry name" value="FATTY ACID/PHOSPHOLIPID SYNTHESIS PROTEIN PLSX"/>
    <property type="match status" value="1"/>
</dbReference>
<dbReference type="PANTHER" id="PTHR30100:SF1">
    <property type="entry name" value="PHOSPHATE ACYLTRANSFERASE"/>
    <property type="match status" value="1"/>
</dbReference>
<dbReference type="Pfam" id="PF02504">
    <property type="entry name" value="FA_synthesis"/>
    <property type="match status" value="1"/>
</dbReference>
<dbReference type="PIRSF" id="PIRSF002465">
    <property type="entry name" value="Phsphlp_syn_PlsX"/>
    <property type="match status" value="1"/>
</dbReference>
<dbReference type="SUPFAM" id="SSF53659">
    <property type="entry name" value="Isocitrate/Isopropylmalate dehydrogenase-like"/>
    <property type="match status" value="1"/>
</dbReference>
<reference key="1">
    <citation type="journal article" date="2002" name="Genome Res.">
        <title>A complete sequence of the T. tengcongensis genome.</title>
        <authorList>
            <person name="Bao Q."/>
            <person name="Tian Y."/>
            <person name="Li W."/>
            <person name="Xu Z."/>
            <person name="Xuan Z."/>
            <person name="Hu S."/>
            <person name="Dong W."/>
            <person name="Yang J."/>
            <person name="Chen Y."/>
            <person name="Xue Y."/>
            <person name="Xu Y."/>
            <person name="Lai X."/>
            <person name="Huang L."/>
            <person name="Dong X."/>
            <person name="Ma Y."/>
            <person name="Ling L."/>
            <person name="Tan H."/>
            <person name="Chen R."/>
            <person name="Wang J."/>
            <person name="Yu J."/>
            <person name="Yang H."/>
        </authorList>
    </citation>
    <scope>NUCLEOTIDE SEQUENCE [LARGE SCALE GENOMIC DNA]</scope>
    <source>
        <strain>DSM 15242 / JCM 11007 / NBRC 100824 / MB4</strain>
    </source>
</reference>
<sequence>MKLAIDAMGGDYAPEEIIKGSLKALDHFKDIEIFLIGKEEALKGLEGKSERLKLIYASEVIENNEAPVAAIKKKKNSSMVVGLELLKKGEVEAFLSAGNTGALMAGSLLILGRIKGIKRPALAPILPTLNGATVLLDAGSNTDCDEENLFQFAVMGHVYAQKMFGIEKPRIGLFNVGTEEEKGNEVVKKAFERLKNSRLNFIGNVEGRDIPYGVCEVVVCDGFVGNAILKSMEGIAFVISQLLKEELSRNIFTKMGALLIMGGLKRITQKMDYTEYGGAPLLGISKPVIKAHGNSKAKAIFNAIKQAKNLVGNDVLRHIKEEIELTGDEISV</sequence>